<comment type="function">
    <text evidence="2">One of the essential components for the initiation of protein synthesis. Protects formylmethionyl-tRNA from spontaneous hydrolysis and promotes its binding to the 30S ribosomal subunits. Also involved in the hydrolysis of GTP during the formation of the 70S ribosomal complex.</text>
</comment>
<comment type="subcellular location">
    <subcellularLocation>
        <location evidence="2">Cytoplasm</location>
    </subcellularLocation>
</comment>
<comment type="similarity">
    <text evidence="2">Belongs to the TRAFAC class translation factor GTPase superfamily. Classic translation factor GTPase family. IF-2 subfamily.</text>
</comment>
<accession>Q21C31</accession>
<protein>
    <recommendedName>
        <fullName evidence="2">Translation initiation factor IF-2</fullName>
    </recommendedName>
</protein>
<name>IF2_RHOPB</name>
<sequence>MVDTKNPGDKTLSVSPSKTLTLKRGVEQGTVRQSFSHGRTKQVVVEKRGKRRVGGDGPADAPAAPAPVAAAKPAPVRAPMSRPPQSSHRGGGSGVVLRTLTEDERTARASALADARIRDEEERKAAEAELARRNSKEGIEQAEREAAEARKKAEEERHRQDEEAKRKAELEAKKRFGEEEAKKAAAAAPAKTTAATTATAAKPGAPARAPGVAADATDEDEGPRQIRRGPGGAARPVVAPKPTAKPAPAKQRGRLTLVTALSADDVRERSIASFRRRTQRLKGHQSNEPKEKLVREVIIPEAITIQELANRMAERAVDVIRMLMKQGQMVKITDVIDADTAQLIAEELGHSVKRVAASDVEEGLFDIVDDATDTEPRSPVVTVMGHVDHGKTSLLDALRHANVVSGEAGGITQHIGAYQVTSPESGKKITFIDTPGHAAFTAMRARGAKVTDIVVLVVAADDGVMPQTIEAINHAKAAKVPVIVAINKIDKQDAKPERVRTELLQYGIQVESLGGDVVDVEVSAKNKTNLDKLLEMIALQAELLDLKTNTERPAEGTVIEAKLDRGRGPVATVLVQRGTLRVGDIIVAGAEMGRVRALISDQGVTLTEAGPSVPVEVLGFNGPPEAGDRMAVVDSEARARQVTSYRAHQKREKSASAVSGLRGSLEQMMSQLKTTGRKDFPLIIKADVAGSLEAILGSLEKLGTDEVTARILHAGVGGISESDVTLAEGFNAAIIGFNVRAHKEAAAAAKRNGIEIRYYNIIYDLVDDVKKAMSGLLAPTLRETMLGNALILEVFNISKVGKVAGCRVTDGSVERGANVRLIRDNVVVHEGKLSTLKRFKDEVKEVQSGQECGMAFENYGDMRAGDIIECYRVETIQRSL</sequence>
<gene>
    <name evidence="2" type="primary">infB</name>
    <name type="ordered locus">RPC_0480</name>
</gene>
<proteinExistence type="inferred from homology"/>
<evidence type="ECO:0000250" key="1"/>
<evidence type="ECO:0000255" key="2">
    <source>
        <dbReference type="HAMAP-Rule" id="MF_00100"/>
    </source>
</evidence>
<evidence type="ECO:0000256" key="3">
    <source>
        <dbReference type="SAM" id="MobiDB-lite"/>
    </source>
</evidence>
<organism>
    <name type="scientific">Rhodopseudomonas palustris (strain BisB18)</name>
    <dbReference type="NCBI Taxonomy" id="316056"/>
    <lineage>
        <taxon>Bacteria</taxon>
        <taxon>Pseudomonadati</taxon>
        <taxon>Pseudomonadota</taxon>
        <taxon>Alphaproteobacteria</taxon>
        <taxon>Hyphomicrobiales</taxon>
        <taxon>Nitrobacteraceae</taxon>
        <taxon>Rhodopseudomonas</taxon>
    </lineage>
</organism>
<feature type="chain" id="PRO_1000008316" description="Translation initiation factor IF-2">
    <location>
        <begin position="1"/>
        <end position="880"/>
    </location>
</feature>
<feature type="domain" description="tr-type G">
    <location>
        <begin position="376"/>
        <end position="547"/>
    </location>
</feature>
<feature type="region of interest" description="Disordered" evidence="3">
    <location>
        <begin position="1"/>
        <end position="251"/>
    </location>
</feature>
<feature type="region of interest" description="G1" evidence="1">
    <location>
        <begin position="385"/>
        <end position="392"/>
    </location>
</feature>
<feature type="region of interest" description="G2" evidence="1">
    <location>
        <begin position="410"/>
        <end position="414"/>
    </location>
</feature>
<feature type="region of interest" description="G3" evidence="1">
    <location>
        <begin position="433"/>
        <end position="436"/>
    </location>
</feature>
<feature type="region of interest" description="G4" evidence="1">
    <location>
        <begin position="487"/>
        <end position="490"/>
    </location>
</feature>
<feature type="region of interest" description="G5" evidence="1">
    <location>
        <begin position="523"/>
        <end position="525"/>
    </location>
</feature>
<feature type="compositionally biased region" description="Low complexity" evidence="3">
    <location>
        <begin position="58"/>
        <end position="79"/>
    </location>
</feature>
<feature type="compositionally biased region" description="Basic and acidic residues" evidence="3">
    <location>
        <begin position="115"/>
        <end position="183"/>
    </location>
</feature>
<feature type="compositionally biased region" description="Low complexity" evidence="3">
    <location>
        <begin position="184"/>
        <end position="215"/>
    </location>
</feature>
<feature type="compositionally biased region" description="Low complexity" evidence="3">
    <location>
        <begin position="233"/>
        <end position="250"/>
    </location>
</feature>
<feature type="binding site" evidence="2">
    <location>
        <begin position="385"/>
        <end position="392"/>
    </location>
    <ligand>
        <name>GTP</name>
        <dbReference type="ChEBI" id="CHEBI:37565"/>
    </ligand>
</feature>
<feature type="binding site" evidence="2">
    <location>
        <begin position="433"/>
        <end position="437"/>
    </location>
    <ligand>
        <name>GTP</name>
        <dbReference type="ChEBI" id="CHEBI:37565"/>
    </ligand>
</feature>
<feature type="binding site" evidence="2">
    <location>
        <begin position="487"/>
        <end position="490"/>
    </location>
    <ligand>
        <name>GTP</name>
        <dbReference type="ChEBI" id="CHEBI:37565"/>
    </ligand>
</feature>
<keyword id="KW-0963">Cytoplasm</keyword>
<keyword id="KW-0342">GTP-binding</keyword>
<keyword id="KW-0396">Initiation factor</keyword>
<keyword id="KW-0547">Nucleotide-binding</keyword>
<keyword id="KW-0648">Protein biosynthesis</keyword>
<reference key="1">
    <citation type="submission" date="2006-03" db="EMBL/GenBank/DDBJ databases">
        <title>Complete sequence of Rhodopseudomonas palustris BisB18.</title>
        <authorList>
            <consortium name="US DOE Joint Genome Institute"/>
            <person name="Copeland A."/>
            <person name="Lucas S."/>
            <person name="Lapidus A."/>
            <person name="Barry K."/>
            <person name="Detter J.C."/>
            <person name="Glavina del Rio T."/>
            <person name="Hammon N."/>
            <person name="Israni S."/>
            <person name="Dalin E."/>
            <person name="Tice H."/>
            <person name="Pitluck S."/>
            <person name="Chain P."/>
            <person name="Malfatti S."/>
            <person name="Shin M."/>
            <person name="Vergez L."/>
            <person name="Schmutz J."/>
            <person name="Larimer F."/>
            <person name="Land M."/>
            <person name="Hauser L."/>
            <person name="Pelletier D.A."/>
            <person name="Kyrpides N."/>
            <person name="Anderson I."/>
            <person name="Oda Y."/>
            <person name="Harwood C.S."/>
            <person name="Richardson P."/>
        </authorList>
    </citation>
    <scope>NUCLEOTIDE SEQUENCE [LARGE SCALE GENOMIC DNA]</scope>
    <source>
        <strain>BisB18</strain>
    </source>
</reference>
<dbReference type="EMBL" id="CP000301">
    <property type="protein sequence ID" value="ABD86055.1"/>
    <property type="molecule type" value="Genomic_DNA"/>
</dbReference>
<dbReference type="SMR" id="Q21C31"/>
<dbReference type="STRING" id="316056.RPC_0480"/>
<dbReference type="KEGG" id="rpc:RPC_0480"/>
<dbReference type="eggNOG" id="COG0532">
    <property type="taxonomic scope" value="Bacteria"/>
</dbReference>
<dbReference type="HOGENOM" id="CLU_006301_10_0_5"/>
<dbReference type="OrthoDB" id="9811804at2"/>
<dbReference type="GO" id="GO:0005829">
    <property type="term" value="C:cytosol"/>
    <property type="evidence" value="ECO:0007669"/>
    <property type="project" value="TreeGrafter"/>
</dbReference>
<dbReference type="GO" id="GO:0005525">
    <property type="term" value="F:GTP binding"/>
    <property type="evidence" value="ECO:0007669"/>
    <property type="project" value="UniProtKB-KW"/>
</dbReference>
<dbReference type="GO" id="GO:0003924">
    <property type="term" value="F:GTPase activity"/>
    <property type="evidence" value="ECO:0007669"/>
    <property type="project" value="UniProtKB-UniRule"/>
</dbReference>
<dbReference type="GO" id="GO:0097216">
    <property type="term" value="F:guanosine tetraphosphate binding"/>
    <property type="evidence" value="ECO:0007669"/>
    <property type="project" value="UniProtKB-ARBA"/>
</dbReference>
<dbReference type="GO" id="GO:0003743">
    <property type="term" value="F:translation initiation factor activity"/>
    <property type="evidence" value="ECO:0007669"/>
    <property type="project" value="UniProtKB-UniRule"/>
</dbReference>
<dbReference type="CDD" id="cd01887">
    <property type="entry name" value="IF2_eIF5B"/>
    <property type="match status" value="1"/>
</dbReference>
<dbReference type="CDD" id="cd03702">
    <property type="entry name" value="IF2_mtIF2_II"/>
    <property type="match status" value="1"/>
</dbReference>
<dbReference type="CDD" id="cd03692">
    <property type="entry name" value="mtIF2_IVc"/>
    <property type="match status" value="1"/>
</dbReference>
<dbReference type="FunFam" id="2.40.30.10:FF:000007">
    <property type="entry name" value="Translation initiation factor IF-2"/>
    <property type="match status" value="1"/>
</dbReference>
<dbReference type="FunFam" id="2.40.30.10:FF:000008">
    <property type="entry name" value="Translation initiation factor IF-2"/>
    <property type="match status" value="1"/>
</dbReference>
<dbReference type="FunFam" id="3.40.50.10050:FF:000001">
    <property type="entry name" value="Translation initiation factor IF-2"/>
    <property type="match status" value="1"/>
</dbReference>
<dbReference type="FunFam" id="3.40.50.300:FF:000019">
    <property type="entry name" value="Translation initiation factor IF-2"/>
    <property type="match status" value="1"/>
</dbReference>
<dbReference type="Gene3D" id="3.40.50.300">
    <property type="entry name" value="P-loop containing nucleotide triphosphate hydrolases"/>
    <property type="match status" value="1"/>
</dbReference>
<dbReference type="Gene3D" id="2.40.30.10">
    <property type="entry name" value="Translation factors"/>
    <property type="match status" value="2"/>
</dbReference>
<dbReference type="Gene3D" id="3.40.50.10050">
    <property type="entry name" value="Translation initiation factor IF- 2, domain 3"/>
    <property type="match status" value="1"/>
</dbReference>
<dbReference type="HAMAP" id="MF_00100_B">
    <property type="entry name" value="IF_2_B"/>
    <property type="match status" value="1"/>
</dbReference>
<dbReference type="InterPro" id="IPR053905">
    <property type="entry name" value="EF-G-like_DII"/>
</dbReference>
<dbReference type="InterPro" id="IPR004161">
    <property type="entry name" value="EFTu-like_2"/>
</dbReference>
<dbReference type="InterPro" id="IPR013575">
    <property type="entry name" value="IF2_assoc_dom_bac"/>
</dbReference>
<dbReference type="InterPro" id="IPR044145">
    <property type="entry name" value="IF2_II"/>
</dbReference>
<dbReference type="InterPro" id="IPR006847">
    <property type="entry name" value="IF2_N"/>
</dbReference>
<dbReference type="InterPro" id="IPR027417">
    <property type="entry name" value="P-loop_NTPase"/>
</dbReference>
<dbReference type="InterPro" id="IPR005225">
    <property type="entry name" value="Small_GTP-bd"/>
</dbReference>
<dbReference type="InterPro" id="IPR000795">
    <property type="entry name" value="T_Tr_GTP-bd_dom"/>
</dbReference>
<dbReference type="InterPro" id="IPR000178">
    <property type="entry name" value="TF_IF2_bacterial-like"/>
</dbReference>
<dbReference type="InterPro" id="IPR015760">
    <property type="entry name" value="TIF_IF2"/>
</dbReference>
<dbReference type="InterPro" id="IPR023115">
    <property type="entry name" value="TIF_IF2_dom3"/>
</dbReference>
<dbReference type="InterPro" id="IPR036925">
    <property type="entry name" value="TIF_IF2_dom3_sf"/>
</dbReference>
<dbReference type="InterPro" id="IPR009000">
    <property type="entry name" value="Transl_B-barrel_sf"/>
</dbReference>
<dbReference type="NCBIfam" id="TIGR00487">
    <property type="entry name" value="IF-2"/>
    <property type="match status" value="1"/>
</dbReference>
<dbReference type="NCBIfam" id="TIGR00231">
    <property type="entry name" value="small_GTP"/>
    <property type="match status" value="1"/>
</dbReference>
<dbReference type="PANTHER" id="PTHR43381:SF5">
    <property type="entry name" value="TR-TYPE G DOMAIN-CONTAINING PROTEIN"/>
    <property type="match status" value="1"/>
</dbReference>
<dbReference type="PANTHER" id="PTHR43381">
    <property type="entry name" value="TRANSLATION INITIATION FACTOR IF-2-RELATED"/>
    <property type="match status" value="1"/>
</dbReference>
<dbReference type="Pfam" id="PF22042">
    <property type="entry name" value="EF-G_D2"/>
    <property type="match status" value="1"/>
</dbReference>
<dbReference type="Pfam" id="PF00009">
    <property type="entry name" value="GTP_EFTU"/>
    <property type="match status" value="1"/>
</dbReference>
<dbReference type="Pfam" id="PF03144">
    <property type="entry name" value="GTP_EFTU_D2"/>
    <property type="match status" value="1"/>
</dbReference>
<dbReference type="Pfam" id="PF11987">
    <property type="entry name" value="IF-2"/>
    <property type="match status" value="1"/>
</dbReference>
<dbReference type="Pfam" id="PF08364">
    <property type="entry name" value="IF2_assoc"/>
    <property type="match status" value="1"/>
</dbReference>
<dbReference type="Pfam" id="PF04760">
    <property type="entry name" value="IF2_N"/>
    <property type="match status" value="1"/>
</dbReference>
<dbReference type="SUPFAM" id="SSF52156">
    <property type="entry name" value="Initiation factor IF2/eIF5b, domain 3"/>
    <property type="match status" value="1"/>
</dbReference>
<dbReference type="SUPFAM" id="SSF52540">
    <property type="entry name" value="P-loop containing nucleoside triphosphate hydrolases"/>
    <property type="match status" value="1"/>
</dbReference>
<dbReference type="SUPFAM" id="SSF50447">
    <property type="entry name" value="Translation proteins"/>
    <property type="match status" value="2"/>
</dbReference>
<dbReference type="PROSITE" id="PS51722">
    <property type="entry name" value="G_TR_2"/>
    <property type="match status" value="1"/>
</dbReference>
<dbReference type="PROSITE" id="PS01176">
    <property type="entry name" value="IF2"/>
    <property type="match status" value="1"/>
</dbReference>